<feature type="chain" id="PRO_0000109444" description="Pyridoxal 5'-phosphate synthase subunit PdxS">
    <location>
        <begin position="1"/>
        <end position="335"/>
    </location>
</feature>
<feature type="active site" description="Schiff-base intermediate with D-ribose 5-phosphate" evidence="1">
    <location>
        <position position="87"/>
    </location>
</feature>
<feature type="binding site" evidence="1">
    <location>
        <position position="30"/>
    </location>
    <ligand>
        <name>D-ribose 5-phosphate</name>
        <dbReference type="ChEBI" id="CHEBI:78346"/>
    </ligand>
</feature>
<feature type="binding site" evidence="1">
    <location>
        <position position="159"/>
    </location>
    <ligand>
        <name>D-ribose 5-phosphate</name>
        <dbReference type="ChEBI" id="CHEBI:78346"/>
    </ligand>
</feature>
<feature type="binding site" evidence="1">
    <location>
        <position position="171"/>
    </location>
    <ligand>
        <name>D-glyceraldehyde 3-phosphate</name>
        <dbReference type="ChEBI" id="CHEBI:59776"/>
    </ligand>
</feature>
<feature type="binding site" evidence="1">
    <location>
        <position position="257"/>
    </location>
    <ligand>
        <name>D-ribose 5-phosphate</name>
        <dbReference type="ChEBI" id="CHEBI:78346"/>
    </ligand>
</feature>
<feature type="binding site" evidence="1">
    <location>
        <begin position="278"/>
        <end position="279"/>
    </location>
    <ligand>
        <name>D-ribose 5-phosphate</name>
        <dbReference type="ChEBI" id="CHEBI:78346"/>
    </ligand>
</feature>
<comment type="function">
    <text evidence="1">Catalyzes the formation of pyridoxal 5'-phosphate from ribose 5-phosphate (RBP), glyceraldehyde 3-phosphate (G3P) and ammonia. The ammonia is provided by the PdxT subunit. Can also use ribulose 5-phosphate and dihydroxyacetone phosphate as substrates, resulting from enzyme-catalyzed isomerization of RBP and G3P, respectively.</text>
</comment>
<comment type="catalytic activity">
    <reaction evidence="1">
        <text>aldehydo-D-ribose 5-phosphate + D-glyceraldehyde 3-phosphate + L-glutamine = pyridoxal 5'-phosphate + L-glutamate + phosphate + 3 H2O + H(+)</text>
        <dbReference type="Rhea" id="RHEA:31507"/>
        <dbReference type="ChEBI" id="CHEBI:15377"/>
        <dbReference type="ChEBI" id="CHEBI:15378"/>
        <dbReference type="ChEBI" id="CHEBI:29985"/>
        <dbReference type="ChEBI" id="CHEBI:43474"/>
        <dbReference type="ChEBI" id="CHEBI:58273"/>
        <dbReference type="ChEBI" id="CHEBI:58359"/>
        <dbReference type="ChEBI" id="CHEBI:59776"/>
        <dbReference type="ChEBI" id="CHEBI:597326"/>
        <dbReference type="EC" id="4.3.3.6"/>
    </reaction>
</comment>
<comment type="pathway">
    <text evidence="1">Cofactor biosynthesis; pyridoxal 5'-phosphate biosynthesis.</text>
</comment>
<comment type="subunit">
    <text evidence="1">In the presence of PdxT, forms a dodecamer of heterodimers.</text>
</comment>
<comment type="similarity">
    <text evidence="1">Belongs to the PdxS/SNZ family.</text>
</comment>
<protein>
    <recommendedName>
        <fullName evidence="1">Pyridoxal 5'-phosphate synthase subunit PdxS</fullName>
        <shortName evidence="1">PLP synthase subunit PdxS</shortName>
        <ecNumber evidence="1">4.3.3.6</ecNumber>
    </recommendedName>
    <alternativeName>
        <fullName evidence="1">Pdx1</fullName>
    </alternativeName>
</protein>
<reference key="1">
    <citation type="journal article" date="1999" name="Genetics">
        <title>Divergence of the hyperthermophilic archaea Pyrococcus furiosus and P. horikoshii inferred from complete genomic sequences.</title>
        <authorList>
            <person name="Maeder D.L."/>
            <person name="Weiss R.B."/>
            <person name="Dunn D.M."/>
            <person name="Cherry J.L."/>
            <person name="Gonzalez J.M."/>
            <person name="DiRuggiero J."/>
            <person name="Robb F.T."/>
        </authorList>
    </citation>
    <scope>NUCLEOTIDE SEQUENCE [LARGE SCALE GENOMIC DNA]</scope>
    <source>
        <strain>ATCC 43587 / DSM 3638 / JCM 8422 / Vc1</strain>
    </source>
</reference>
<sequence>MDKMKIIMEKGTERLKRGFAKMVKGGVIMDVTNAEQARIAEEAGAVAVMALHKVPADIRKAGGVARMAPVEKIQEIMDAVTIPVMAKVRIGHEAEARILEALGVDMIDESEVLTPADPFFHIYKKKFTVPFVCGARNLGEAVRRIWEGAAMIRTKGEAGTGNIIEAVRHVRLVNENIRLIQRMTDEEIYGVAEKFAEPYLRLAFSVKEISGLPKRVLENEPIYEGFTYREIVDGLYKILLEIKKLGRLPVVNFAAGGVATPADAALMMAMGMDGVFVGSGIFKSSNPPAMARAIVEAVNHWDEPDVLAEISREIGEPMRGQDIAELEVRMEERGV</sequence>
<dbReference type="EC" id="4.3.3.6" evidence="1"/>
<dbReference type="EMBL" id="AE009950">
    <property type="protein sequence ID" value="AAL81653.1"/>
    <property type="molecule type" value="Genomic_DNA"/>
</dbReference>
<dbReference type="RefSeq" id="WP_011012676.1">
    <property type="nucleotide sequence ID" value="NZ_CP023154.1"/>
</dbReference>
<dbReference type="SMR" id="Q8U0Q6"/>
<dbReference type="STRING" id="186497.PF1529"/>
<dbReference type="PaxDb" id="186497-PF1529"/>
<dbReference type="GeneID" id="41713348"/>
<dbReference type="KEGG" id="pfu:PF1529"/>
<dbReference type="PATRIC" id="fig|186497.12.peg.1594"/>
<dbReference type="eggNOG" id="arCOG04075">
    <property type="taxonomic scope" value="Archaea"/>
</dbReference>
<dbReference type="HOGENOM" id="CLU_055352_1_0_2"/>
<dbReference type="OrthoDB" id="6840at2157"/>
<dbReference type="PhylomeDB" id="Q8U0Q6"/>
<dbReference type="UniPathway" id="UPA00245"/>
<dbReference type="Proteomes" id="UP000001013">
    <property type="component" value="Chromosome"/>
</dbReference>
<dbReference type="GO" id="GO:0036381">
    <property type="term" value="F:pyridoxal 5'-phosphate synthase (glutamine hydrolysing) activity"/>
    <property type="evidence" value="ECO:0007669"/>
    <property type="project" value="UniProtKB-UniRule"/>
</dbReference>
<dbReference type="GO" id="GO:0006520">
    <property type="term" value="P:amino acid metabolic process"/>
    <property type="evidence" value="ECO:0007669"/>
    <property type="project" value="TreeGrafter"/>
</dbReference>
<dbReference type="GO" id="GO:0042823">
    <property type="term" value="P:pyridoxal phosphate biosynthetic process"/>
    <property type="evidence" value="ECO:0007669"/>
    <property type="project" value="UniProtKB-UniRule"/>
</dbReference>
<dbReference type="GO" id="GO:0008615">
    <property type="term" value="P:pyridoxine biosynthetic process"/>
    <property type="evidence" value="ECO:0007669"/>
    <property type="project" value="TreeGrafter"/>
</dbReference>
<dbReference type="CDD" id="cd04727">
    <property type="entry name" value="pdxS"/>
    <property type="match status" value="1"/>
</dbReference>
<dbReference type="FunFam" id="3.20.20.70:FF:000406">
    <property type="entry name" value="Pyridoxal 5'-phosphate synthase subunit PdxS"/>
    <property type="match status" value="1"/>
</dbReference>
<dbReference type="Gene3D" id="3.20.20.70">
    <property type="entry name" value="Aldolase class I"/>
    <property type="match status" value="1"/>
</dbReference>
<dbReference type="HAMAP" id="MF_01824">
    <property type="entry name" value="PdxS"/>
    <property type="match status" value="1"/>
</dbReference>
<dbReference type="InterPro" id="IPR013785">
    <property type="entry name" value="Aldolase_TIM"/>
</dbReference>
<dbReference type="InterPro" id="IPR001852">
    <property type="entry name" value="PdxS/SNZ"/>
</dbReference>
<dbReference type="InterPro" id="IPR033755">
    <property type="entry name" value="PdxS/SNZ_N"/>
</dbReference>
<dbReference type="InterPro" id="IPR011060">
    <property type="entry name" value="RibuloseP-bd_barrel"/>
</dbReference>
<dbReference type="InterPro" id="IPR033983">
    <property type="entry name" value="Thiazole_synthase_ThiG"/>
</dbReference>
<dbReference type="NCBIfam" id="NF003215">
    <property type="entry name" value="PRK04180.1"/>
    <property type="match status" value="1"/>
</dbReference>
<dbReference type="NCBIfam" id="TIGR00343">
    <property type="entry name" value="pyridoxal 5'-phosphate synthase lyase subunit PdxS"/>
    <property type="match status" value="1"/>
</dbReference>
<dbReference type="PANTHER" id="PTHR31829">
    <property type="entry name" value="PYRIDOXAL 5'-PHOSPHATE SYNTHASE SUBUNIT SNZ1-RELATED"/>
    <property type="match status" value="1"/>
</dbReference>
<dbReference type="PANTHER" id="PTHR31829:SF0">
    <property type="entry name" value="PYRIDOXAL 5'-PHOSPHATE SYNTHASE SUBUNIT SNZ1-RELATED"/>
    <property type="match status" value="1"/>
</dbReference>
<dbReference type="Pfam" id="PF01680">
    <property type="entry name" value="SOR_SNZ"/>
    <property type="match status" value="1"/>
</dbReference>
<dbReference type="Pfam" id="PF05690">
    <property type="entry name" value="ThiG"/>
    <property type="match status" value="1"/>
</dbReference>
<dbReference type="PIRSF" id="PIRSF029271">
    <property type="entry name" value="Pdx1"/>
    <property type="match status" value="1"/>
</dbReference>
<dbReference type="SUPFAM" id="SSF51366">
    <property type="entry name" value="Ribulose-phoshate binding barrel"/>
    <property type="match status" value="1"/>
</dbReference>
<dbReference type="PROSITE" id="PS01235">
    <property type="entry name" value="PDXS_SNZ_1"/>
    <property type="match status" value="1"/>
</dbReference>
<dbReference type="PROSITE" id="PS51129">
    <property type="entry name" value="PDXS_SNZ_2"/>
    <property type="match status" value="1"/>
</dbReference>
<proteinExistence type="inferred from homology"/>
<organism>
    <name type="scientific">Pyrococcus furiosus (strain ATCC 43587 / DSM 3638 / JCM 8422 / Vc1)</name>
    <dbReference type="NCBI Taxonomy" id="186497"/>
    <lineage>
        <taxon>Archaea</taxon>
        <taxon>Methanobacteriati</taxon>
        <taxon>Methanobacteriota</taxon>
        <taxon>Thermococci</taxon>
        <taxon>Thermococcales</taxon>
        <taxon>Thermococcaceae</taxon>
        <taxon>Pyrococcus</taxon>
    </lineage>
</organism>
<gene>
    <name evidence="1" type="primary">pdxS</name>
    <name type="ordered locus">PF1529</name>
</gene>
<accession>Q8U0Q6</accession>
<name>PDXS_PYRFU</name>
<evidence type="ECO:0000255" key="1">
    <source>
        <dbReference type="HAMAP-Rule" id="MF_01824"/>
    </source>
</evidence>
<keyword id="KW-0456">Lyase</keyword>
<keyword id="KW-0663">Pyridoxal phosphate</keyword>
<keyword id="KW-1185">Reference proteome</keyword>
<keyword id="KW-0704">Schiff base</keyword>